<evidence type="ECO:0000250" key="1"/>
<evidence type="ECO:0000255" key="2">
    <source>
        <dbReference type="PROSITE-ProRule" id="PRU00169"/>
    </source>
</evidence>
<evidence type="ECO:0000305" key="3"/>
<protein>
    <recommendedName>
        <fullName>Transcriptional regulatory protein DpiA</fullName>
    </recommendedName>
</protein>
<accession>P0AEF7</accession>
<accession>Q54149</accession>
<reference key="1">
    <citation type="submission" date="1995-06" db="EMBL/GenBank/DDBJ databases">
        <authorList>
            <person name="Qi M.S."/>
            <person name="Yoshikura H."/>
            <person name="Watanabe H."/>
        </authorList>
    </citation>
    <scope>NUCLEOTIDE SEQUENCE [GENOMIC DNA]</scope>
    <source>
        <strain>HW1002 / Serotype 1b</strain>
    </source>
</reference>
<proteinExistence type="inferred from homology"/>
<name>DPIA_SHIFL</name>
<comment type="function">
    <text>Positive transcriptional regulator for increasing the expression of ipa genes.</text>
</comment>
<comment type="subcellular location">
    <subcellularLocation>
        <location evidence="3">Cytoplasm</location>
    </subcellularLocation>
</comment>
<comment type="PTM">
    <text evidence="1">Phosphorylated by DpiB.</text>
</comment>
<feature type="chain" id="PRO_0000081071" description="Transcriptional regulatory protein DpiA">
    <location>
        <begin position="1"/>
        <end position="226"/>
    </location>
</feature>
<feature type="domain" description="Response regulatory" evidence="2">
    <location>
        <begin position="6"/>
        <end position="122"/>
    </location>
</feature>
<feature type="DNA-binding region" description="H-T-H motif" evidence="1">
    <location>
        <begin position="180"/>
        <end position="199"/>
    </location>
</feature>
<feature type="modified residue" description="4-aspartylphosphate" evidence="2">
    <location>
        <position position="57"/>
    </location>
</feature>
<sequence>MTAPLTLLIVEDETPLAEMHAEYIRHIPGFSQILLAGNLAQARMMIERFKPGLILLDNYLPDGRGINLLHELVQAHYPGDVVFTTAASDMETVSEAVRCGVFDYLIKPIAYERLGQTLTRFRQRKHMLESIDSASQKQIDEMFNAYARGEPKDELPTGIDPLTLNAVRKLFKEPGVQHTAETVAQALTISRTTARRYLEYCASRHLIIAEIVHGKVGRPQRIYHSG</sequence>
<organism>
    <name type="scientific">Shigella flexneri</name>
    <dbReference type="NCBI Taxonomy" id="623"/>
    <lineage>
        <taxon>Bacteria</taxon>
        <taxon>Pseudomonadati</taxon>
        <taxon>Pseudomonadota</taxon>
        <taxon>Gammaproteobacteria</taxon>
        <taxon>Enterobacterales</taxon>
        <taxon>Enterobacteriaceae</taxon>
        <taxon>Shigella</taxon>
    </lineage>
</organism>
<keyword id="KW-0010">Activator</keyword>
<keyword id="KW-0963">Cytoplasm</keyword>
<keyword id="KW-0238">DNA-binding</keyword>
<keyword id="KW-0597">Phosphoprotein</keyword>
<keyword id="KW-0804">Transcription</keyword>
<keyword id="KW-0805">Transcription regulation</keyword>
<keyword id="KW-0902">Two-component regulatory system</keyword>
<gene>
    <name type="primary">dpiA</name>
    <name type="synonym">criR</name>
</gene>
<dbReference type="EMBL" id="U29654">
    <property type="protein sequence ID" value="AAA86117.1"/>
    <property type="molecule type" value="Genomic_DNA"/>
</dbReference>
<dbReference type="RefSeq" id="WP_000126500.1">
    <property type="nucleotide sequence ID" value="NZ_SPPU01000012.1"/>
</dbReference>
<dbReference type="SMR" id="P0AEF7"/>
<dbReference type="GeneID" id="75205018"/>
<dbReference type="GO" id="GO:0005737">
    <property type="term" value="C:cytoplasm"/>
    <property type="evidence" value="ECO:0007669"/>
    <property type="project" value="UniProtKB-SubCell"/>
</dbReference>
<dbReference type="GO" id="GO:0003677">
    <property type="term" value="F:DNA binding"/>
    <property type="evidence" value="ECO:0007669"/>
    <property type="project" value="UniProtKB-KW"/>
</dbReference>
<dbReference type="GO" id="GO:0003700">
    <property type="term" value="F:DNA-binding transcription factor activity"/>
    <property type="evidence" value="ECO:0007669"/>
    <property type="project" value="InterPro"/>
</dbReference>
<dbReference type="GO" id="GO:0000156">
    <property type="term" value="F:phosphorelay response regulator activity"/>
    <property type="evidence" value="ECO:0007669"/>
    <property type="project" value="TreeGrafter"/>
</dbReference>
<dbReference type="CDD" id="cd19925">
    <property type="entry name" value="REC_citrate_TCS"/>
    <property type="match status" value="1"/>
</dbReference>
<dbReference type="FunFam" id="3.40.50.2300:FF:000057">
    <property type="entry name" value="Transcriptional regulatory protein"/>
    <property type="match status" value="1"/>
</dbReference>
<dbReference type="Gene3D" id="3.40.50.2300">
    <property type="match status" value="1"/>
</dbReference>
<dbReference type="InterPro" id="IPR051271">
    <property type="entry name" value="2C-system_Tx_regulators"/>
</dbReference>
<dbReference type="InterPro" id="IPR011006">
    <property type="entry name" value="CheY-like_superfamily"/>
</dbReference>
<dbReference type="InterPro" id="IPR048714">
    <property type="entry name" value="DpiA-like_HTH"/>
</dbReference>
<dbReference type="InterPro" id="IPR024187">
    <property type="entry name" value="Sig_transdc_resp-reg_cit/mal"/>
</dbReference>
<dbReference type="InterPro" id="IPR001789">
    <property type="entry name" value="Sig_transdc_resp-reg_receiver"/>
</dbReference>
<dbReference type="NCBIfam" id="NF007467">
    <property type="entry name" value="PRK10046.1"/>
    <property type="match status" value="1"/>
</dbReference>
<dbReference type="PANTHER" id="PTHR45526:SF1">
    <property type="entry name" value="TRANSCRIPTIONAL REGULATORY PROTEIN DCUR-RELATED"/>
    <property type="match status" value="1"/>
</dbReference>
<dbReference type="PANTHER" id="PTHR45526">
    <property type="entry name" value="TRANSCRIPTIONAL REGULATORY PROTEIN DPIA"/>
    <property type="match status" value="1"/>
</dbReference>
<dbReference type="Pfam" id="PF20714">
    <property type="entry name" value="HTH_64"/>
    <property type="match status" value="1"/>
</dbReference>
<dbReference type="Pfam" id="PF00072">
    <property type="entry name" value="Response_reg"/>
    <property type="match status" value="1"/>
</dbReference>
<dbReference type="PIRSF" id="PIRSF006171">
    <property type="entry name" value="RR_citrat_malat"/>
    <property type="match status" value="1"/>
</dbReference>
<dbReference type="SMART" id="SM00448">
    <property type="entry name" value="REC"/>
    <property type="match status" value="1"/>
</dbReference>
<dbReference type="SUPFAM" id="SSF52172">
    <property type="entry name" value="CheY-like"/>
    <property type="match status" value="1"/>
</dbReference>
<dbReference type="PROSITE" id="PS50110">
    <property type="entry name" value="RESPONSE_REGULATORY"/>
    <property type="match status" value="1"/>
</dbReference>